<keyword id="KW-0378">Hydrolase</keyword>
<keyword id="KW-0460">Magnesium</keyword>
<keyword id="KW-0479">Metal-binding</keyword>
<keyword id="KW-0540">Nuclease</keyword>
<keyword id="KW-0614">Plasmid</keyword>
<keyword id="KW-1185">Reference proteome</keyword>
<keyword id="KW-1277">Toxin-antitoxin system</keyword>
<evidence type="ECO:0000255" key="1">
    <source>
        <dbReference type="HAMAP-Rule" id="MF_00265"/>
    </source>
</evidence>
<protein>
    <recommendedName>
        <fullName evidence="1">Ribonuclease VapC1</fullName>
        <shortName evidence="1">RNase VapC1</shortName>
        <ecNumber evidence="1">3.1.-.-</ecNumber>
    </recommendedName>
    <alternativeName>
        <fullName evidence="1">Toxin VapC1</fullName>
    </alternativeName>
</protein>
<name>VAPC1_AQUAE</name>
<geneLocation type="plasmid">
    <name>ece1</name>
</geneLocation>
<proteinExistence type="inferred from homology"/>
<sequence length="144" mass="16600">MNSEKVFVDGNVIVDIFDERRVNHKYSVQAIRILLANKFDLLTSSDLITTVYYVLSKIDKKKALSDIKEVVNILEIIPFGKAEVEKAIELMEGDKNFKDLEDTLQYVLAKKEGCKLILSNDKSFYSPDIEVLTTEEFCERWNTL</sequence>
<comment type="function">
    <text evidence="1">Toxic component of a type II toxin-antitoxin (TA) system. An RNase.</text>
</comment>
<comment type="cofactor">
    <cofactor evidence="1">
        <name>Mg(2+)</name>
        <dbReference type="ChEBI" id="CHEBI:18420"/>
    </cofactor>
</comment>
<comment type="similarity">
    <text evidence="1">Belongs to the PINc/VapC protein family.</text>
</comment>
<dbReference type="EC" id="3.1.-.-" evidence="1"/>
<dbReference type="EMBL" id="AE000667">
    <property type="protein sequence ID" value="AAC07951.1"/>
    <property type="molecule type" value="Genomic_DNA"/>
</dbReference>
<dbReference type="RefSeq" id="NP_046399.1">
    <property type="nucleotide sequence ID" value="NC_001880.1"/>
</dbReference>
<dbReference type="RefSeq" id="WP_010890545.1">
    <property type="nucleotide sequence ID" value="NC_001880.1"/>
</dbReference>
<dbReference type="SMR" id="O66399"/>
<dbReference type="EnsemblBacteria" id="AAC07951">
    <property type="protein sequence ID" value="AAC07951"/>
    <property type="gene ID" value="aq_aa03"/>
</dbReference>
<dbReference type="KEGG" id="aae:aq_aa03"/>
<dbReference type="eggNOG" id="COG2402">
    <property type="taxonomic scope" value="Bacteria"/>
</dbReference>
<dbReference type="HOGENOM" id="CLU_124456_2_0_0"/>
<dbReference type="InParanoid" id="O66399"/>
<dbReference type="OrthoDB" id="5373272at2"/>
<dbReference type="Proteomes" id="UP000000798">
    <property type="component" value="Plasmid ece1"/>
</dbReference>
<dbReference type="GO" id="GO:0000287">
    <property type="term" value="F:magnesium ion binding"/>
    <property type="evidence" value="ECO:0007669"/>
    <property type="project" value="UniProtKB-UniRule"/>
</dbReference>
<dbReference type="GO" id="GO:0004540">
    <property type="term" value="F:RNA nuclease activity"/>
    <property type="evidence" value="ECO:0007669"/>
    <property type="project" value="InterPro"/>
</dbReference>
<dbReference type="CDD" id="cd09854">
    <property type="entry name" value="PIN_VapC-like"/>
    <property type="match status" value="1"/>
</dbReference>
<dbReference type="Gene3D" id="3.40.50.1010">
    <property type="entry name" value="5'-nuclease"/>
    <property type="match status" value="1"/>
</dbReference>
<dbReference type="HAMAP" id="MF_00265">
    <property type="entry name" value="VapC_Nob1"/>
    <property type="match status" value="1"/>
</dbReference>
<dbReference type="InterPro" id="IPR029060">
    <property type="entry name" value="PIN-like_dom_sf"/>
</dbReference>
<dbReference type="InterPro" id="IPR002716">
    <property type="entry name" value="PIN_dom"/>
</dbReference>
<dbReference type="InterPro" id="IPR022907">
    <property type="entry name" value="VapC_family"/>
</dbReference>
<dbReference type="Pfam" id="PF01850">
    <property type="entry name" value="PIN"/>
    <property type="match status" value="1"/>
</dbReference>
<dbReference type="SUPFAM" id="SSF88723">
    <property type="entry name" value="PIN domain-like"/>
    <property type="match status" value="1"/>
</dbReference>
<feature type="chain" id="PRO_0000186980" description="Ribonuclease VapC1">
    <location>
        <begin position="1"/>
        <end position="144"/>
    </location>
</feature>
<feature type="domain" description="PINc" evidence="1">
    <location>
        <begin position="6"/>
        <end position="132"/>
    </location>
</feature>
<feature type="binding site" evidence="1">
    <location>
        <position position="9"/>
    </location>
    <ligand>
        <name>Mg(2+)</name>
        <dbReference type="ChEBI" id="CHEBI:18420"/>
    </ligand>
</feature>
<feature type="binding site" evidence="1">
    <location>
        <position position="102"/>
    </location>
    <ligand>
        <name>Mg(2+)</name>
        <dbReference type="ChEBI" id="CHEBI:18420"/>
    </ligand>
</feature>
<organism>
    <name type="scientific">Aquifex aeolicus (strain VF5)</name>
    <dbReference type="NCBI Taxonomy" id="224324"/>
    <lineage>
        <taxon>Bacteria</taxon>
        <taxon>Pseudomonadati</taxon>
        <taxon>Aquificota</taxon>
        <taxon>Aquificia</taxon>
        <taxon>Aquificales</taxon>
        <taxon>Aquificaceae</taxon>
        <taxon>Aquifex</taxon>
    </lineage>
</organism>
<accession>O66399</accession>
<reference key="1">
    <citation type="journal article" date="1998" name="Nature">
        <title>The complete genome of the hyperthermophilic bacterium Aquifex aeolicus.</title>
        <authorList>
            <person name="Deckert G."/>
            <person name="Warren P.V."/>
            <person name="Gaasterland T."/>
            <person name="Young W.G."/>
            <person name="Lenox A.L."/>
            <person name="Graham D.E."/>
            <person name="Overbeek R."/>
            <person name="Snead M.A."/>
            <person name="Keller M."/>
            <person name="Aujay M."/>
            <person name="Huber R."/>
            <person name="Feldman R.A."/>
            <person name="Short J.M."/>
            <person name="Olsen G.J."/>
            <person name="Swanson R.V."/>
        </authorList>
    </citation>
    <scope>NUCLEOTIDE SEQUENCE [LARGE SCALE GENOMIC DNA]</scope>
    <source>
        <strain>VF5</strain>
    </source>
</reference>
<reference key="2">
    <citation type="journal article" date="2005" name="Nucleic Acids Res.">
        <title>Toxin-antitoxin loci are highly abundant in free-living but lost from host-associated prokaryotes.</title>
        <authorList>
            <person name="Pandey D.P."/>
            <person name="Gerdes K."/>
        </authorList>
    </citation>
    <scope>POSSIBLE FUNCTION</scope>
    <source>
        <strain>VF5</strain>
    </source>
</reference>
<gene>
    <name evidence="1" type="primary">vapC1</name>
    <name type="ordered locus">aq_aa03</name>
</gene>